<comment type="function">
    <text evidence="1">Functions in the N-end rule pathway of protein degradation where it conjugates Leu, Phe and, less efficiently, Met from aminoacyl-tRNAs to the N-termini of proteins containing an N-terminal arginine or lysine.</text>
</comment>
<comment type="catalytic activity">
    <reaction evidence="1">
        <text>N-terminal L-lysyl-[protein] + L-leucyl-tRNA(Leu) = N-terminal L-leucyl-L-lysyl-[protein] + tRNA(Leu) + H(+)</text>
        <dbReference type="Rhea" id="RHEA:12340"/>
        <dbReference type="Rhea" id="RHEA-COMP:9613"/>
        <dbReference type="Rhea" id="RHEA-COMP:9622"/>
        <dbReference type="Rhea" id="RHEA-COMP:12670"/>
        <dbReference type="Rhea" id="RHEA-COMP:12671"/>
        <dbReference type="ChEBI" id="CHEBI:15378"/>
        <dbReference type="ChEBI" id="CHEBI:65249"/>
        <dbReference type="ChEBI" id="CHEBI:78442"/>
        <dbReference type="ChEBI" id="CHEBI:78494"/>
        <dbReference type="ChEBI" id="CHEBI:133043"/>
        <dbReference type="EC" id="2.3.2.6"/>
    </reaction>
</comment>
<comment type="catalytic activity">
    <reaction evidence="1">
        <text>N-terminal L-arginyl-[protein] + L-leucyl-tRNA(Leu) = N-terminal L-leucyl-L-arginyl-[protein] + tRNA(Leu) + H(+)</text>
        <dbReference type="Rhea" id="RHEA:50416"/>
        <dbReference type="Rhea" id="RHEA-COMP:9613"/>
        <dbReference type="Rhea" id="RHEA-COMP:9622"/>
        <dbReference type="Rhea" id="RHEA-COMP:12672"/>
        <dbReference type="Rhea" id="RHEA-COMP:12673"/>
        <dbReference type="ChEBI" id="CHEBI:15378"/>
        <dbReference type="ChEBI" id="CHEBI:64719"/>
        <dbReference type="ChEBI" id="CHEBI:78442"/>
        <dbReference type="ChEBI" id="CHEBI:78494"/>
        <dbReference type="ChEBI" id="CHEBI:133044"/>
        <dbReference type="EC" id="2.3.2.6"/>
    </reaction>
</comment>
<comment type="catalytic activity">
    <reaction evidence="1">
        <text>L-phenylalanyl-tRNA(Phe) + an N-terminal L-alpha-aminoacyl-[protein] = an N-terminal L-phenylalanyl-L-alpha-aminoacyl-[protein] + tRNA(Phe)</text>
        <dbReference type="Rhea" id="RHEA:43632"/>
        <dbReference type="Rhea" id="RHEA-COMP:9668"/>
        <dbReference type="Rhea" id="RHEA-COMP:9699"/>
        <dbReference type="Rhea" id="RHEA-COMP:10636"/>
        <dbReference type="Rhea" id="RHEA-COMP:10637"/>
        <dbReference type="ChEBI" id="CHEBI:78442"/>
        <dbReference type="ChEBI" id="CHEBI:78531"/>
        <dbReference type="ChEBI" id="CHEBI:78597"/>
        <dbReference type="ChEBI" id="CHEBI:83561"/>
        <dbReference type="EC" id="2.3.2.6"/>
    </reaction>
</comment>
<comment type="subcellular location">
    <subcellularLocation>
        <location evidence="1">Cytoplasm</location>
    </subcellularLocation>
</comment>
<comment type="similarity">
    <text evidence="1">Belongs to the L/F-transferase family.</text>
</comment>
<comment type="sequence caution" evidence="2">
    <conflict type="erroneous initiation">
        <sequence resource="EMBL-CDS" id="CAG19566"/>
    </conflict>
</comment>
<proteinExistence type="inferred from homology"/>
<sequence>MAIYLPELDPENTLFPKPETALDEPNGLLAFGGDLQPARLLAAYRQGIFPWYSNGEPILWWSPAPRAIFLPNEFKPSKSLRKFYRKSGYQITLNNACHDVIRQCANCRSPEETWITEDMIQAYQTMHNLGHCHSVEVWHQDKLVGGFYGLQIGSVFCGESMFSLADNASKIALWFFCRHFSNQGGTLIDCQVMNNHLESLGALEIPRAPFMQQLHQQRAAIIKPNSFVPQTLKIPIE</sequence>
<feature type="chain" id="PRO_0000207233" description="Leucyl/phenylalanyl-tRNA--protein transferase">
    <location>
        <begin position="1"/>
        <end position="237"/>
    </location>
</feature>
<reference key="1">
    <citation type="journal article" date="2005" name="Science">
        <title>Life at depth: Photobacterium profundum genome sequence and expression analysis.</title>
        <authorList>
            <person name="Vezzi A."/>
            <person name="Campanaro S."/>
            <person name="D'Angelo M."/>
            <person name="Simonato F."/>
            <person name="Vitulo N."/>
            <person name="Lauro F.M."/>
            <person name="Cestaro A."/>
            <person name="Malacrida G."/>
            <person name="Simionati B."/>
            <person name="Cannata N."/>
            <person name="Romualdi C."/>
            <person name="Bartlett D.H."/>
            <person name="Valle G."/>
        </authorList>
    </citation>
    <scope>NUCLEOTIDE SEQUENCE [LARGE SCALE GENOMIC DNA]</scope>
    <source>
        <strain>ATCC BAA-1253 / SS9</strain>
    </source>
</reference>
<organism>
    <name type="scientific">Photobacterium profundum (strain SS9)</name>
    <dbReference type="NCBI Taxonomy" id="298386"/>
    <lineage>
        <taxon>Bacteria</taxon>
        <taxon>Pseudomonadati</taxon>
        <taxon>Pseudomonadota</taxon>
        <taxon>Gammaproteobacteria</taxon>
        <taxon>Vibrionales</taxon>
        <taxon>Vibrionaceae</taxon>
        <taxon>Photobacterium</taxon>
    </lineage>
</organism>
<gene>
    <name evidence="1" type="primary">aat</name>
    <name type="ordered locus">PBPRA1155</name>
</gene>
<evidence type="ECO:0000255" key="1">
    <source>
        <dbReference type="HAMAP-Rule" id="MF_00688"/>
    </source>
</evidence>
<evidence type="ECO:0000305" key="2"/>
<protein>
    <recommendedName>
        <fullName evidence="1">Leucyl/phenylalanyl-tRNA--protein transferase</fullName>
        <ecNumber evidence="1">2.3.2.6</ecNumber>
    </recommendedName>
    <alternativeName>
        <fullName evidence="1">L/F-transferase</fullName>
    </alternativeName>
    <alternativeName>
        <fullName evidence="1">Leucyltransferase</fullName>
    </alternativeName>
    <alternativeName>
        <fullName evidence="1">Phenyalanyltransferase</fullName>
    </alternativeName>
</protein>
<name>LFTR_PHOPR</name>
<dbReference type="EC" id="2.3.2.6" evidence="1"/>
<dbReference type="EMBL" id="CR378666">
    <property type="protein sequence ID" value="CAG19566.1"/>
    <property type="status" value="ALT_INIT"/>
    <property type="molecule type" value="Genomic_DNA"/>
</dbReference>
<dbReference type="RefSeq" id="WP_041393977.1">
    <property type="nucleotide sequence ID" value="NC_006370.1"/>
</dbReference>
<dbReference type="SMR" id="Q6LT10"/>
<dbReference type="STRING" id="298386.PBPRA1155"/>
<dbReference type="KEGG" id="ppr:PBPRA1155"/>
<dbReference type="eggNOG" id="COG2360">
    <property type="taxonomic scope" value="Bacteria"/>
</dbReference>
<dbReference type="HOGENOM" id="CLU_075045_0_0_6"/>
<dbReference type="Proteomes" id="UP000000593">
    <property type="component" value="Chromosome 1"/>
</dbReference>
<dbReference type="GO" id="GO:0005737">
    <property type="term" value="C:cytoplasm"/>
    <property type="evidence" value="ECO:0007669"/>
    <property type="project" value="UniProtKB-SubCell"/>
</dbReference>
<dbReference type="GO" id="GO:0008914">
    <property type="term" value="F:leucyl-tRNA--protein transferase activity"/>
    <property type="evidence" value="ECO:0007669"/>
    <property type="project" value="UniProtKB-UniRule"/>
</dbReference>
<dbReference type="GO" id="GO:0030163">
    <property type="term" value="P:protein catabolic process"/>
    <property type="evidence" value="ECO:0007669"/>
    <property type="project" value="UniProtKB-UniRule"/>
</dbReference>
<dbReference type="FunFam" id="3.30.70.3550:FF:000001">
    <property type="entry name" value="Leucyl/phenylalanyl-tRNA--protein transferase"/>
    <property type="match status" value="1"/>
</dbReference>
<dbReference type="FunFam" id="3.40.630.70:FF:000001">
    <property type="entry name" value="Leucyl/phenylalanyl-tRNA--protein transferase"/>
    <property type="match status" value="1"/>
</dbReference>
<dbReference type="Gene3D" id="3.40.630.70">
    <property type="entry name" value="Leucyl/phenylalanyl-tRNA-protein transferase, C-terminal domain"/>
    <property type="match status" value="1"/>
</dbReference>
<dbReference type="Gene3D" id="3.30.70.3550">
    <property type="entry name" value="Leucyl/phenylalanyl-tRNA-protein transferase, N-terminal domain"/>
    <property type="match status" value="1"/>
</dbReference>
<dbReference type="HAMAP" id="MF_00688">
    <property type="entry name" value="Leu_Phe_trans"/>
    <property type="match status" value="1"/>
</dbReference>
<dbReference type="InterPro" id="IPR016181">
    <property type="entry name" value="Acyl_CoA_acyltransferase"/>
</dbReference>
<dbReference type="InterPro" id="IPR004616">
    <property type="entry name" value="Leu/Phe-tRNA_Trfase"/>
</dbReference>
<dbReference type="InterPro" id="IPR042203">
    <property type="entry name" value="Leu/Phe-tRNA_Trfase_C"/>
</dbReference>
<dbReference type="InterPro" id="IPR042221">
    <property type="entry name" value="Leu/Phe-tRNA_Trfase_N"/>
</dbReference>
<dbReference type="NCBIfam" id="TIGR00667">
    <property type="entry name" value="aat"/>
    <property type="match status" value="1"/>
</dbReference>
<dbReference type="PANTHER" id="PTHR30098">
    <property type="entry name" value="LEUCYL/PHENYLALANYL-TRNA--PROTEIN TRANSFERASE"/>
    <property type="match status" value="1"/>
</dbReference>
<dbReference type="PANTHER" id="PTHR30098:SF2">
    <property type="entry name" value="LEUCYL_PHENYLALANYL-TRNA--PROTEIN TRANSFERASE"/>
    <property type="match status" value="1"/>
</dbReference>
<dbReference type="Pfam" id="PF03588">
    <property type="entry name" value="Leu_Phe_trans"/>
    <property type="match status" value="1"/>
</dbReference>
<dbReference type="SUPFAM" id="SSF55729">
    <property type="entry name" value="Acyl-CoA N-acyltransferases (Nat)"/>
    <property type="match status" value="1"/>
</dbReference>
<accession>Q6LT10</accession>
<keyword id="KW-0012">Acyltransferase</keyword>
<keyword id="KW-0963">Cytoplasm</keyword>
<keyword id="KW-1185">Reference proteome</keyword>
<keyword id="KW-0808">Transferase</keyword>